<evidence type="ECO:0000255" key="1">
    <source>
        <dbReference type="HAMAP-Rule" id="MF_01382"/>
    </source>
</evidence>
<feature type="chain" id="PRO_0000109588" description="Protein translocase subunit SecA">
    <location>
        <begin position="1"/>
        <end position="865"/>
    </location>
</feature>
<feature type="binding site" evidence="1">
    <location>
        <position position="93"/>
    </location>
    <ligand>
        <name>ATP</name>
        <dbReference type="ChEBI" id="CHEBI:30616"/>
    </ligand>
</feature>
<feature type="binding site" evidence="1">
    <location>
        <begin position="111"/>
        <end position="115"/>
    </location>
    <ligand>
        <name>ATP</name>
        <dbReference type="ChEBI" id="CHEBI:30616"/>
    </ligand>
</feature>
<feature type="binding site" evidence="1">
    <location>
        <position position="501"/>
    </location>
    <ligand>
        <name>ATP</name>
        <dbReference type="ChEBI" id="CHEBI:30616"/>
    </ligand>
</feature>
<feature type="binding site" evidence="1">
    <location>
        <position position="841"/>
    </location>
    <ligand>
        <name>Zn(2+)</name>
        <dbReference type="ChEBI" id="CHEBI:29105"/>
    </ligand>
</feature>
<feature type="binding site" evidence="1">
    <location>
        <position position="843"/>
    </location>
    <ligand>
        <name>Zn(2+)</name>
        <dbReference type="ChEBI" id="CHEBI:29105"/>
    </ligand>
</feature>
<feature type="binding site" evidence="1">
    <location>
        <position position="852"/>
    </location>
    <ligand>
        <name>Zn(2+)</name>
        <dbReference type="ChEBI" id="CHEBI:29105"/>
    </ligand>
</feature>
<feature type="binding site" evidence="1">
    <location>
        <position position="853"/>
    </location>
    <ligand>
        <name>Zn(2+)</name>
        <dbReference type="ChEBI" id="CHEBI:29105"/>
    </ligand>
</feature>
<proteinExistence type="inferred from homology"/>
<name>SECA_HELPJ</name>
<accession>Q9ZL57</accession>
<gene>
    <name evidence="1" type="primary">secA</name>
    <name type="ordered locus">jhp_0723</name>
</gene>
<reference key="1">
    <citation type="journal article" date="1999" name="Nature">
        <title>Genomic sequence comparison of two unrelated isolates of the human gastric pathogen Helicobacter pylori.</title>
        <authorList>
            <person name="Alm R.A."/>
            <person name="Ling L.-S.L."/>
            <person name="Moir D.T."/>
            <person name="King B.L."/>
            <person name="Brown E.D."/>
            <person name="Doig P.C."/>
            <person name="Smith D.R."/>
            <person name="Noonan B."/>
            <person name="Guild B.C."/>
            <person name="deJonge B.L."/>
            <person name="Carmel G."/>
            <person name="Tummino P.J."/>
            <person name="Caruso A."/>
            <person name="Uria-Nickelsen M."/>
            <person name="Mills D.M."/>
            <person name="Ives C."/>
            <person name="Gibson R."/>
            <person name="Merberg D."/>
            <person name="Mills S.D."/>
            <person name="Jiang Q."/>
            <person name="Taylor D.E."/>
            <person name="Vovis G.F."/>
            <person name="Trust T.J."/>
        </authorList>
    </citation>
    <scope>NUCLEOTIDE SEQUENCE [LARGE SCALE GENOMIC DNA]</scope>
    <source>
        <strain>J99 / ATCC 700824</strain>
    </source>
</reference>
<protein>
    <recommendedName>
        <fullName evidence="1">Protein translocase subunit SecA</fullName>
        <ecNumber evidence="1">7.4.2.8</ecNumber>
    </recommendedName>
</protein>
<dbReference type="EC" id="7.4.2.8" evidence="1"/>
<dbReference type="EMBL" id="AE001439">
    <property type="protein sequence ID" value="AAD06297.1"/>
    <property type="molecule type" value="Genomic_DNA"/>
</dbReference>
<dbReference type="PIR" id="C71897">
    <property type="entry name" value="C71897"/>
</dbReference>
<dbReference type="RefSeq" id="WP_000588099.1">
    <property type="nucleotide sequence ID" value="NC_000921.1"/>
</dbReference>
<dbReference type="SMR" id="Q9ZL57"/>
<dbReference type="KEGG" id="hpj:jhp_0723"/>
<dbReference type="eggNOG" id="COG0653">
    <property type="taxonomic scope" value="Bacteria"/>
</dbReference>
<dbReference type="Proteomes" id="UP000000804">
    <property type="component" value="Chromosome"/>
</dbReference>
<dbReference type="GO" id="GO:0031522">
    <property type="term" value="C:cell envelope Sec protein transport complex"/>
    <property type="evidence" value="ECO:0007669"/>
    <property type="project" value="TreeGrafter"/>
</dbReference>
<dbReference type="GO" id="GO:0005829">
    <property type="term" value="C:cytosol"/>
    <property type="evidence" value="ECO:0007669"/>
    <property type="project" value="TreeGrafter"/>
</dbReference>
<dbReference type="GO" id="GO:0005886">
    <property type="term" value="C:plasma membrane"/>
    <property type="evidence" value="ECO:0007669"/>
    <property type="project" value="UniProtKB-SubCell"/>
</dbReference>
<dbReference type="GO" id="GO:0005524">
    <property type="term" value="F:ATP binding"/>
    <property type="evidence" value="ECO:0007669"/>
    <property type="project" value="UniProtKB-UniRule"/>
</dbReference>
<dbReference type="GO" id="GO:0046872">
    <property type="term" value="F:metal ion binding"/>
    <property type="evidence" value="ECO:0007669"/>
    <property type="project" value="UniProtKB-KW"/>
</dbReference>
<dbReference type="GO" id="GO:0008564">
    <property type="term" value="F:protein-exporting ATPase activity"/>
    <property type="evidence" value="ECO:0007669"/>
    <property type="project" value="UniProtKB-EC"/>
</dbReference>
<dbReference type="GO" id="GO:0065002">
    <property type="term" value="P:intracellular protein transmembrane transport"/>
    <property type="evidence" value="ECO:0007669"/>
    <property type="project" value="UniProtKB-UniRule"/>
</dbReference>
<dbReference type="GO" id="GO:0017038">
    <property type="term" value="P:protein import"/>
    <property type="evidence" value="ECO:0007669"/>
    <property type="project" value="InterPro"/>
</dbReference>
<dbReference type="GO" id="GO:0006605">
    <property type="term" value="P:protein targeting"/>
    <property type="evidence" value="ECO:0007669"/>
    <property type="project" value="UniProtKB-UniRule"/>
</dbReference>
<dbReference type="GO" id="GO:0043952">
    <property type="term" value="P:protein transport by the Sec complex"/>
    <property type="evidence" value="ECO:0007669"/>
    <property type="project" value="TreeGrafter"/>
</dbReference>
<dbReference type="CDD" id="cd17928">
    <property type="entry name" value="DEXDc_SecA"/>
    <property type="match status" value="1"/>
</dbReference>
<dbReference type="CDD" id="cd18803">
    <property type="entry name" value="SF2_C_secA"/>
    <property type="match status" value="1"/>
</dbReference>
<dbReference type="FunFam" id="3.40.50.300:FF:000429">
    <property type="entry name" value="Preprotein translocase subunit SecA"/>
    <property type="match status" value="1"/>
</dbReference>
<dbReference type="FunFam" id="3.90.1440.10:FF:000001">
    <property type="entry name" value="Preprotein translocase subunit SecA"/>
    <property type="match status" value="1"/>
</dbReference>
<dbReference type="FunFam" id="1.10.3060.10:FF:000012">
    <property type="entry name" value="Protein translocase subunit SecA"/>
    <property type="match status" value="1"/>
</dbReference>
<dbReference type="Gene3D" id="1.10.3060.10">
    <property type="entry name" value="Helical scaffold and wing domains of SecA"/>
    <property type="match status" value="1"/>
</dbReference>
<dbReference type="Gene3D" id="3.40.50.300">
    <property type="entry name" value="P-loop containing nucleotide triphosphate hydrolases"/>
    <property type="match status" value="3"/>
</dbReference>
<dbReference type="Gene3D" id="3.90.1440.10">
    <property type="entry name" value="SecA, preprotein cross-linking domain"/>
    <property type="match status" value="1"/>
</dbReference>
<dbReference type="HAMAP" id="MF_01382">
    <property type="entry name" value="SecA"/>
    <property type="match status" value="1"/>
</dbReference>
<dbReference type="InterPro" id="IPR014001">
    <property type="entry name" value="Helicase_ATP-bd"/>
</dbReference>
<dbReference type="InterPro" id="IPR001650">
    <property type="entry name" value="Helicase_C-like"/>
</dbReference>
<dbReference type="InterPro" id="IPR027417">
    <property type="entry name" value="P-loop_NTPase"/>
</dbReference>
<dbReference type="InterPro" id="IPR004027">
    <property type="entry name" value="SEC_C_motif"/>
</dbReference>
<dbReference type="InterPro" id="IPR000185">
    <property type="entry name" value="SecA"/>
</dbReference>
<dbReference type="InterPro" id="IPR020937">
    <property type="entry name" value="SecA_CS"/>
</dbReference>
<dbReference type="InterPro" id="IPR011115">
    <property type="entry name" value="SecA_DEAD"/>
</dbReference>
<dbReference type="InterPro" id="IPR014018">
    <property type="entry name" value="SecA_motor_DEAD"/>
</dbReference>
<dbReference type="InterPro" id="IPR011130">
    <property type="entry name" value="SecA_preprotein_X-link_dom"/>
</dbReference>
<dbReference type="InterPro" id="IPR044722">
    <property type="entry name" value="SecA_SF2_C"/>
</dbReference>
<dbReference type="InterPro" id="IPR011116">
    <property type="entry name" value="SecA_Wing/Scaffold"/>
</dbReference>
<dbReference type="InterPro" id="IPR036266">
    <property type="entry name" value="SecA_Wing/Scaffold_sf"/>
</dbReference>
<dbReference type="InterPro" id="IPR036670">
    <property type="entry name" value="SecA_X-link_sf"/>
</dbReference>
<dbReference type="NCBIfam" id="NF006630">
    <property type="entry name" value="PRK09200.1"/>
    <property type="match status" value="1"/>
</dbReference>
<dbReference type="NCBIfam" id="TIGR00963">
    <property type="entry name" value="secA"/>
    <property type="match status" value="1"/>
</dbReference>
<dbReference type="PANTHER" id="PTHR30612:SF0">
    <property type="entry name" value="CHLOROPLAST PROTEIN-TRANSPORTING ATPASE"/>
    <property type="match status" value="1"/>
</dbReference>
<dbReference type="PANTHER" id="PTHR30612">
    <property type="entry name" value="SECA INNER MEMBRANE COMPONENT OF SEC PROTEIN SECRETION SYSTEM"/>
    <property type="match status" value="1"/>
</dbReference>
<dbReference type="Pfam" id="PF21090">
    <property type="entry name" value="P-loop_SecA"/>
    <property type="match status" value="1"/>
</dbReference>
<dbReference type="Pfam" id="PF02810">
    <property type="entry name" value="SEC-C"/>
    <property type="match status" value="1"/>
</dbReference>
<dbReference type="Pfam" id="PF07517">
    <property type="entry name" value="SecA_DEAD"/>
    <property type="match status" value="1"/>
</dbReference>
<dbReference type="Pfam" id="PF01043">
    <property type="entry name" value="SecA_PP_bind"/>
    <property type="match status" value="1"/>
</dbReference>
<dbReference type="Pfam" id="PF07516">
    <property type="entry name" value="SecA_SW"/>
    <property type="match status" value="1"/>
</dbReference>
<dbReference type="PRINTS" id="PR00906">
    <property type="entry name" value="SECA"/>
</dbReference>
<dbReference type="SMART" id="SM00957">
    <property type="entry name" value="SecA_DEAD"/>
    <property type="match status" value="1"/>
</dbReference>
<dbReference type="SMART" id="SM00958">
    <property type="entry name" value="SecA_PP_bind"/>
    <property type="match status" value="1"/>
</dbReference>
<dbReference type="SUPFAM" id="SSF81886">
    <property type="entry name" value="Helical scaffold and wing domains of SecA"/>
    <property type="match status" value="1"/>
</dbReference>
<dbReference type="SUPFAM" id="SSF52540">
    <property type="entry name" value="P-loop containing nucleoside triphosphate hydrolases"/>
    <property type="match status" value="2"/>
</dbReference>
<dbReference type="SUPFAM" id="SSF81767">
    <property type="entry name" value="Pre-protein crosslinking domain of SecA"/>
    <property type="match status" value="1"/>
</dbReference>
<dbReference type="PROSITE" id="PS01312">
    <property type="entry name" value="SECA"/>
    <property type="match status" value="1"/>
</dbReference>
<dbReference type="PROSITE" id="PS51196">
    <property type="entry name" value="SECA_MOTOR_DEAD"/>
    <property type="match status" value="1"/>
</dbReference>
<keyword id="KW-0067">ATP-binding</keyword>
<keyword id="KW-0997">Cell inner membrane</keyword>
<keyword id="KW-1003">Cell membrane</keyword>
<keyword id="KW-0963">Cytoplasm</keyword>
<keyword id="KW-0472">Membrane</keyword>
<keyword id="KW-0479">Metal-binding</keyword>
<keyword id="KW-0547">Nucleotide-binding</keyword>
<keyword id="KW-0653">Protein transport</keyword>
<keyword id="KW-1278">Translocase</keyword>
<keyword id="KW-0811">Translocation</keyword>
<keyword id="KW-0813">Transport</keyword>
<keyword id="KW-0862">Zinc</keyword>
<organism>
    <name type="scientific">Helicobacter pylori (strain J99 / ATCC 700824)</name>
    <name type="common">Campylobacter pylori J99</name>
    <dbReference type="NCBI Taxonomy" id="85963"/>
    <lineage>
        <taxon>Bacteria</taxon>
        <taxon>Pseudomonadati</taxon>
        <taxon>Campylobacterota</taxon>
        <taxon>Epsilonproteobacteria</taxon>
        <taxon>Campylobacterales</taxon>
        <taxon>Helicobacteraceae</taxon>
        <taxon>Helicobacter</taxon>
    </lineage>
</organism>
<sequence length="865" mass="98895">MIKAIIGKIIGTRNDRWIKQYKKKVLAINALEPTYEKMSDVELQNAFEELKKRVRSVEKDLQEKTLLEVLPESFAITREASKRILKMRHFDVQLIGGMVLNDGKIAEMKTGEGKTLVATLAVALNAMKGESVYVVTVNDYLAHRDSKEMEPLYQFLGYSVGTITASVRDDDERLEIYSKDIVYGTNNEFGFDYLRDNMKYSLEHKVQKSHAFAIVDEVDSILIDEARTPLIISGPVDRRMENYNKADEVAKSMQVEVDFTIDEKNRAILITEEGIKKAENLFGVDNLYKIENAALSHHLDQALKANYLFFIDKDYIVANNEVVIVDEFTGRLSEGRRFSEGLHQALEAKEGVSIKEESQTLADITFQNYFRMFSKLSGMTGTAQTEATEFLEIYNLEVVSIPTNLAIKRKDLNDLIYKSEKEKFDAVILKIKELHDKGQPVLVGTASIEKSETLHALLKKERIPHTVLNAKQHTKEAEIIKDAGLKGAVTIATNMAGRGVDIKLTDEVKELGGLYIIGTERHESRRIDNQLRGRSGRQGDPGVSQFYLSLEDNLLRIFGSDRIKGVMEKLGLKDGEHIESKLVTRAVENAQKKVENLHFESRKHLLEYDDVANEQRKSVYKFRDELLDINYDISAKIAENREYALNQIFSKLKAFDHQNLSEEELLGLKNILKEDFNASVELEDLEKASPIEKFVAEKLKSDYENKMKALDSEQRSRIERIVYLQILDNAWREHLYTMDNLKTGINLRGYNQKDPLVEYKKESYNLFLELIGDIKIEAIQTFSKIQFENEQDSSDAERYLDNFSEEREHESVTYRHEEALDEDLNVAVKAFSKTPKRNEPCPCGSGKKYKDCCAKSGPKKGLFAK</sequence>
<comment type="function">
    <text evidence="1">Part of the Sec protein translocase complex. Interacts with the SecYEG preprotein conducting channel. Has a central role in coupling the hydrolysis of ATP to the transfer of proteins into and across the cell membrane, serving as an ATP-driven molecular motor driving the stepwise translocation of polypeptide chains across the membrane.</text>
</comment>
<comment type="catalytic activity">
    <reaction evidence="1">
        <text>ATP + H2O + cellular proteinSide 1 = ADP + phosphate + cellular proteinSide 2.</text>
        <dbReference type="EC" id="7.4.2.8"/>
    </reaction>
</comment>
<comment type="cofactor">
    <cofactor evidence="1">
        <name>Zn(2+)</name>
        <dbReference type="ChEBI" id="CHEBI:29105"/>
    </cofactor>
    <text evidence="1">May bind 1 zinc ion per subunit.</text>
</comment>
<comment type="subunit">
    <text evidence="1">Monomer and homodimer. Part of the essential Sec protein translocation apparatus which comprises SecA, SecYEG and auxiliary proteins SecDF-YajC and YidC.</text>
</comment>
<comment type="subcellular location">
    <subcellularLocation>
        <location evidence="1">Cell inner membrane</location>
        <topology evidence="1">Peripheral membrane protein</topology>
        <orientation evidence="1">Cytoplasmic side</orientation>
    </subcellularLocation>
    <subcellularLocation>
        <location evidence="1">Cytoplasm</location>
    </subcellularLocation>
    <text evidence="1">Distribution is 50-50.</text>
</comment>
<comment type="similarity">
    <text evidence="1">Belongs to the SecA family.</text>
</comment>